<reference key="1">
    <citation type="journal article" date="2008" name="J. Bacteriol.">
        <title>Insights into the environmental resistance gene pool from the genome sequence of the multidrug-resistant environmental isolate Escherichia coli SMS-3-5.</title>
        <authorList>
            <person name="Fricke W.F."/>
            <person name="Wright M.S."/>
            <person name="Lindell A.H."/>
            <person name="Harkins D.M."/>
            <person name="Baker-Austin C."/>
            <person name="Ravel J."/>
            <person name="Stepanauskas R."/>
        </authorList>
    </citation>
    <scope>NUCLEOTIDE SEQUENCE [LARGE SCALE GENOMIC DNA]</scope>
    <source>
        <strain>SMS-3-5 / SECEC</strain>
    </source>
</reference>
<evidence type="ECO:0000255" key="1">
    <source>
        <dbReference type="HAMAP-Rule" id="MF_00801"/>
    </source>
</evidence>
<name>NFI_ECOSM</name>
<sequence>MDLASLRAQQIELASSVIREDRLDKDPPDLIAGADVGFEQGGEVTRAAMVLLKYPSLELVEYKVARIATTMPYIPGFLSFREYPALLAAWEMLSQKPDLVFVDGHGISHPRRLGVASHFGLLVDVPTIGVAKKRLCGKFEPLSSEPGALAPLMDKGEQLAWVWRSKARCNPLFIATGHRVSVDSALAWVQRCMKGYRLPEPTRWADAVASERPAFVRYTANQP</sequence>
<protein>
    <recommendedName>
        <fullName evidence="1">Endonuclease V</fullName>
        <ecNumber evidence="1">3.1.21.7</ecNumber>
    </recommendedName>
    <alternativeName>
        <fullName evidence="1">Deoxyinosine 3'endonuclease</fullName>
    </alternativeName>
    <alternativeName>
        <fullName evidence="1">Deoxyribonuclease V</fullName>
        <shortName evidence="1">DNase V</shortName>
    </alternativeName>
</protein>
<comment type="function">
    <text evidence="1">DNA repair enzyme involved in the repair of deaminated bases. Selectively cleaves double-stranded DNA at the second phosphodiester bond 3' to a deoxyinosine leaving behind the intact lesion on the nicked DNA.</text>
</comment>
<comment type="catalytic activity">
    <reaction evidence="1">
        <text>Endonucleolytic cleavage at apurinic or apyrimidinic sites to products with a 5'-phosphate.</text>
        <dbReference type="EC" id="3.1.21.7"/>
    </reaction>
</comment>
<comment type="cofactor">
    <cofactor evidence="1">
        <name>Mg(2+)</name>
        <dbReference type="ChEBI" id="CHEBI:18420"/>
    </cofactor>
</comment>
<comment type="subcellular location">
    <subcellularLocation>
        <location evidence="1">Cytoplasm</location>
    </subcellularLocation>
</comment>
<comment type="similarity">
    <text evidence="1">Belongs to the endonuclease V family.</text>
</comment>
<feature type="chain" id="PRO_1000191573" description="Endonuclease V">
    <location>
        <begin position="1"/>
        <end position="223"/>
    </location>
</feature>
<feature type="binding site" evidence="1">
    <location>
        <position position="35"/>
    </location>
    <ligand>
        <name>Mg(2+)</name>
        <dbReference type="ChEBI" id="CHEBI:18420"/>
    </ligand>
</feature>
<feature type="binding site" evidence="1">
    <location>
        <position position="103"/>
    </location>
    <ligand>
        <name>Mg(2+)</name>
        <dbReference type="ChEBI" id="CHEBI:18420"/>
    </ligand>
</feature>
<feature type="site" description="Interaction with target DNA" evidence="1">
    <location>
        <position position="73"/>
    </location>
</feature>
<proteinExistence type="inferred from homology"/>
<keyword id="KW-0963">Cytoplasm</keyword>
<keyword id="KW-0227">DNA damage</keyword>
<keyword id="KW-0234">DNA repair</keyword>
<keyword id="KW-0255">Endonuclease</keyword>
<keyword id="KW-0378">Hydrolase</keyword>
<keyword id="KW-0460">Magnesium</keyword>
<keyword id="KW-0479">Metal-binding</keyword>
<keyword id="KW-0540">Nuclease</keyword>
<accession>B1LNV0</accession>
<gene>
    <name evidence="1" type="primary">nfi</name>
    <name type="ordered locus">EcSMS35_4446</name>
</gene>
<dbReference type="EC" id="3.1.21.7" evidence="1"/>
<dbReference type="EMBL" id="CP000970">
    <property type="protein sequence ID" value="ACB17347.1"/>
    <property type="molecule type" value="Genomic_DNA"/>
</dbReference>
<dbReference type="RefSeq" id="WP_000362388.1">
    <property type="nucleotide sequence ID" value="NC_010498.1"/>
</dbReference>
<dbReference type="SMR" id="B1LNV0"/>
<dbReference type="GeneID" id="75169444"/>
<dbReference type="KEGG" id="ecm:EcSMS35_4446"/>
<dbReference type="HOGENOM" id="CLU_047631_1_0_6"/>
<dbReference type="Proteomes" id="UP000007011">
    <property type="component" value="Chromosome"/>
</dbReference>
<dbReference type="GO" id="GO:0005737">
    <property type="term" value="C:cytoplasm"/>
    <property type="evidence" value="ECO:0007669"/>
    <property type="project" value="UniProtKB-SubCell"/>
</dbReference>
<dbReference type="GO" id="GO:0043737">
    <property type="term" value="F:deoxyribonuclease V activity"/>
    <property type="evidence" value="ECO:0007669"/>
    <property type="project" value="UniProtKB-UniRule"/>
</dbReference>
<dbReference type="GO" id="GO:0000287">
    <property type="term" value="F:magnesium ion binding"/>
    <property type="evidence" value="ECO:0007669"/>
    <property type="project" value="UniProtKB-UniRule"/>
</dbReference>
<dbReference type="GO" id="GO:0016891">
    <property type="term" value="F:RNA endonuclease activity, producing 5'-phosphomonoesters"/>
    <property type="evidence" value="ECO:0007669"/>
    <property type="project" value="TreeGrafter"/>
</dbReference>
<dbReference type="GO" id="GO:0003727">
    <property type="term" value="F:single-stranded RNA binding"/>
    <property type="evidence" value="ECO:0007669"/>
    <property type="project" value="TreeGrafter"/>
</dbReference>
<dbReference type="GO" id="GO:0006281">
    <property type="term" value="P:DNA repair"/>
    <property type="evidence" value="ECO:0007669"/>
    <property type="project" value="UniProtKB-UniRule"/>
</dbReference>
<dbReference type="CDD" id="cd06559">
    <property type="entry name" value="Endonuclease_V"/>
    <property type="match status" value="1"/>
</dbReference>
<dbReference type="FunFam" id="3.30.2170.10:FF:000001">
    <property type="entry name" value="Endonuclease V"/>
    <property type="match status" value="1"/>
</dbReference>
<dbReference type="Gene3D" id="3.30.2170.10">
    <property type="entry name" value="archaeoglobus fulgidus dsm 4304 superfamily"/>
    <property type="match status" value="1"/>
</dbReference>
<dbReference type="HAMAP" id="MF_00801">
    <property type="entry name" value="Endonuclease_5"/>
    <property type="match status" value="1"/>
</dbReference>
<dbReference type="InterPro" id="IPR007581">
    <property type="entry name" value="Endonuclease-V"/>
</dbReference>
<dbReference type="NCBIfam" id="NF008629">
    <property type="entry name" value="PRK11617.1"/>
    <property type="match status" value="1"/>
</dbReference>
<dbReference type="PANTHER" id="PTHR28511">
    <property type="entry name" value="ENDONUCLEASE V"/>
    <property type="match status" value="1"/>
</dbReference>
<dbReference type="PANTHER" id="PTHR28511:SF1">
    <property type="entry name" value="ENDONUCLEASE V"/>
    <property type="match status" value="1"/>
</dbReference>
<dbReference type="Pfam" id="PF04493">
    <property type="entry name" value="Endonuclease_5"/>
    <property type="match status" value="1"/>
</dbReference>
<organism>
    <name type="scientific">Escherichia coli (strain SMS-3-5 / SECEC)</name>
    <dbReference type="NCBI Taxonomy" id="439855"/>
    <lineage>
        <taxon>Bacteria</taxon>
        <taxon>Pseudomonadati</taxon>
        <taxon>Pseudomonadota</taxon>
        <taxon>Gammaproteobacteria</taxon>
        <taxon>Enterobacterales</taxon>
        <taxon>Enterobacteriaceae</taxon>
        <taxon>Escherichia</taxon>
    </lineage>
</organism>